<comment type="function">
    <text evidence="1">Required for maturation of ribosomal RNAs and formation of the large ribosomal subunit.</text>
</comment>
<comment type="subcellular location">
    <subcellularLocation>
        <location evidence="1">Nucleus</location>
        <location evidence="1">Nucleolus</location>
    </subcellularLocation>
    <subcellularLocation>
        <location evidence="1">Nucleus</location>
        <location evidence="1">Nucleoplasm</location>
    </subcellularLocation>
</comment>
<comment type="similarity">
    <text evidence="1">Belongs to the WD repeat WDR12/YTM1 family.</text>
</comment>
<dbReference type="EMBL" id="AAAB01008807">
    <property type="protein sequence ID" value="EAA04191.3"/>
    <property type="molecule type" value="Genomic_DNA"/>
</dbReference>
<dbReference type="SMR" id="Q7QJ33"/>
<dbReference type="FunCoup" id="Q7QJ33">
    <property type="interactions" value="1956"/>
</dbReference>
<dbReference type="STRING" id="7165.Q7QJ33"/>
<dbReference type="PaxDb" id="7165-AGAP007244-PA"/>
<dbReference type="EnsemblMetazoa" id="AGAP007244-RA">
    <property type="protein sequence ID" value="AGAP007244-PA"/>
    <property type="gene ID" value="AGAP007244"/>
</dbReference>
<dbReference type="GeneID" id="1269902"/>
<dbReference type="KEGG" id="aga:1269902"/>
<dbReference type="VEuPathDB" id="VectorBase:AGAMI1_008545"/>
<dbReference type="VEuPathDB" id="VectorBase:AGAP007244"/>
<dbReference type="eggNOG" id="KOG0313">
    <property type="taxonomic scope" value="Eukaryota"/>
</dbReference>
<dbReference type="HOGENOM" id="CLU_000288_57_0_1"/>
<dbReference type="InParanoid" id="Q7QJ33"/>
<dbReference type="OMA" id="DHKYVEF"/>
<dbReference type="PhylomeDB" id="Q7QJ33"/>
<dbReference type="Proteomes" id="UP000007062">
    <property type="component" value="Chromosome 2L"/>
</dbReference>
<dbReference type="GO" id="GO:0005654">
    <property type="term" value="C:nucleoplasm"/>
    <property type="evidence" value="ECO:0007669"/>
    <property type="project" value="UniProtKB-SubCell"/>
</dbReference>
<dbReference type="GO" id="GO:0070545">
    <property type="term" value="C:PeBoW complex"/>
    <property type="evidence" value="ECO:0000250"/>
    <property type="project" value="UniProtKB"/>
</dbReference>
<dbReference type="GO" id="GO:0030687">
    <property type="term" value="C:preribosome, large subunit precursor"/>
    <property type="evidence" value="ECO:0007669"/>
    <property type="project" value="UniProtKB-UniRule"/>
</dbReference>
<dbReference type="GO" id="GO:0043021">
    <property type="term" value="F:ribonucleoprotein complex binding"/>
    <property type="evidence" value="ECO:0007669"/>
    <property type="project" value="UniProtKB-UniRule"/>
</dbReference>
<dbReference type="GO" id="GO:0000466">
    <property type="term" value="P:maturation of 5.8S rRNA from tricistronic rRNA transcript (SSU-rRNA, 5.8S rRNA, LSU-rRNA)"/>
    <property type="evidence" value="ECO:0007669"/>
    <property type="project" value="UniProtKB-UniRule"/>
</dbReference>
<dbReference type="GO" id="GO:0000463">
    <property type="term" value="P:maturation of LSU-rRNA from tricistronic rRNA transcript (SSU-rRNA, 5.8S rRNA, LSU-rRNA)"/>
    <property type="evidence" value="ECO:0000250"/>
    <property type="project" value="UniProtKB"/>
</dbReference>
<dbReference type="CDD" id="cd00200">
    <property type="entry name" value="WD40"/>
    <property type="match status" value="1"/>
</dbReference>
<dbReference type="FunFam" id="2.130.10.10:FF:001328">
    <property type="entry name" value="Ribosome biogenesis protein WDR12 homolog"/>
    <property type="match status" value="1"/>
</dbReference>
<dbReference type="Gene3D" id="2.130.10.10">
    <property type="entry name" value="YVTN repeat-like/Quinoprotein amine dehydrogenase"/>
    <property type="match status" value="1"/>
</dbReference>
<dbReference type="HAMAP" id="MF_03029">
    <property type="entry name" value="WDR12"/>
    <property type="match status" value="1"/>
</dbReference>
<dbReference type="InterPro" id="IPR020472">
    <property type="entry name" value="G-protein_beta_WD-40_rep"/>
</dbReference>
<dbReference type="InterPro" id="IPR012972">
    <property type="entry name" value="NLE"/>
</dbReference>
<dbReference type="InterPro" id="IPR015943">
    <property type="entry name" value="WD40/YVTN_repeat-like_dom_sf"/>
</dbReference>
<dbReference type="InterPro" id="IPR019775">
    <property type="entry name" value="WD40_repeat_CS"/>
</dbReference>
<dbReference type="InterPro" id="IPR036322">
    <property type="entry name" value="WD40_repeat_dom_sf"/>
</dbReference>
<dbReference type="InterPro" id="IPR001680">
    <property type="entry name" value="WD40_rpt"/>
</dbReference>
<dbReference type="InterPro" id="IPR028599">
    <property type="entry name" value="WDR12/Ytm1"/>
</dbReference>
<dbReference type="PANTHER" id="PTHR19855:SF11">
    <property type="entry name" value="RIBOSOME BIOGENESIS PROTEIN WDR12"/>
    <property type="match status" value="1"/>
</dbReference>
<dbReference type="PANTHER" id="PTHR19855">
    <property type="entry name" value="WD40 REPEAT PROTEIN 12, 37"/>
    <property type="match status" value="1"/>
</dbReference>
<dbReference type="Pfam" id="PF08154">
    <property type="entry name" value="NLE"/>
    <property type="match status" value="1"/>
</dbReference>
<dbReference type="Pfam" id="PF00400">
    <property type="entry name" value="WD40"/>
    <property type="match status" value="7"/>
</dbReference>
<dbReference type="PRINTS" id="PR00320">
    <property type="entry name" value="GPROTEINBRPT"/>
</dbReference>
<dbReference type="SMART" id="SM00320">
    <property type="entry name" value="WD40"/>
    <property type="match status" value="7"/>
</dbReference>
<dbReference type="SUPFAM" id="SSF50978">
    <property type="entry name" value="WD40 repeat-like"/>
    <property type="match status" value="1"/>
</dbReference>
<dbReference type="PROSITE" id="PS00678">
    <property type="entry name" value="WD_REPEATS_1"/>
    <property type="match status" value="2"/>
</dbReference>
<dbReference type="PROSITE" id="PS50082">
    <property type="entry name" value="WD_REPEATS_2"/>
    <property type="match status" value="4"/>
</dbReference>
<dbReference type="PROSITE" id="PS50294">
    <property type="entry name" value="WD_REPEATS_REGION"/>
    <property type="match status" value="1"/>
</dbReference>
<organism>
    <name type="scientific">Anopheles gambiae</name>
    <name type="common">African malaria mosquito</name>
    <dbReference type="NCBI Taxonomy" id="7165"/>
    <lineage>
        <taxon>Eukaryota</taxon>
        <taxon>Metazoa</taxon>
        <taxon>Ecdysozoa</taxon>
        <taxon>Arthropoda</taxon>
        <taxon>Hexapoda</taxon>
        <taxon>Insecta</taxon>
        <taxon>Pterygota</taxon>
        <taxon>Neoptera</taxon>
        <taxon>Endopterygota</taxon>
        <taxon>Diptera</taxon>
        <taxon>Nematocera</taxon>
        <taxon>Culicoidea</taxon>
        <taxon>Culicidae</taxon>
        <taxon>Anophelinae</taxon>
        <taxon>Anopheles</taxon>
    </lineage>
</organism>
<name>WDR12_ANOGA</name>
<feature type="chain" id="PRO_0000369553" description="Ribosome biogenesis protein WDR12 homolog">
    <location>
        <begin position="1"/>
        <end position="428"/>
    </location>
</feature>
<feature type="repeat" description="WD 1">
    <location>
        <begin position="109"/>
        <end position="146"/>
    </location>
</feature>
<feature type="repeat" description="WD 2">
    <location>
        <begin position="148"/>
        <end position="190"/>
    </location>
</feature>
<feature type="repeat" description="WD 3">
    <location>
        <begin position="197"/>
        <end position="236"/>
    </location>
</feature>
<feature type="repeat" description="WD 4">
    <location>
        <begin position="259"/>
        <end position="297"/>
    </location>
</feature>
<feature type="repeat" description="WD 5">
    <location>
        <begin position="299"/>
        <end position="338"/>
    </location>
</feature>
<feature type="repeat" description="WD 6">
    <location>
        <begin position="344"/>
        <end position="384"/>
    </location>
</feature>
<feature type="repeat" description="WD 7">
    <location>
        <begin position="388"/>
        <end position="426"/>
    </location>
</feature>
<feature type="region of interest" description="Ubiquitin-like (UBL) domain" evidence="1">
    <location>
        <begin position="13"/>
        <end position="97"/>
    </location>
</feature>
<evidence type="ECO:0000255" key="1">
    <source>
        <dbReference type="HAMAP-Rule" id="MF_03029"/>
    </source>
</evidence>
<reference key="1">
    <citation type="journal article" date="2002" name="Science">
        <title>The genome sequence of the malaria mosquito Anopheles gambiae.</title>
        <authorList>
            <person name="Holt R.A."/>
            <person name="Subramanian G.M."/>
            <person name="Halpern A."/>
            <person name="Sutton G.G."/>
            <person name="Charlab R."/>
            <person name="Nusskern D.R."/>
            <person name="Wincker P."/>
            <person name="Clark A.G."/>
            <person name="Ribeiro J.M.C."/>
            <person name="Wides R."/>
            <person name="Salzberg S.L."/>
            <person name="Loftus B.J."/>
            <person name="Yandell M.D."/>
            <person name="Majoros W.H."/>
            <person name="Rusch D.B."/>
            <person name="Lai Z."/>
            <person name="Kraft C.L."/>
            <person name="Abril J.F."/>
            <person name="Anthouard V."/>
            <person name="Arensburger P."/>
            <person name="Atkinson P.W."/>
            <person name="Baden H."/>
            <person name="de Berardinis V."/>
            <person name="Baldwin D."/>
            <person name="Benes V."/>
            <person name="Biedler J."/>
            <person name="Blass C."/>
            <person name="Bolanos R."/>
            <person name="Boscus D."/>
            <person name="Barnstead M."/>
            <person name="Cai S."/>
            <person name="Center A."/>
            <person name="Chaturverdi K."/>
            <person name="Christophides G.K."/>
            <person name="Chrystal M.A.M."/>
            <person name="Clamp M."/>
            <person name="Cravchik A."/>
            <person name="Curwen V."/>
            <person name="Dana A."/>
            <person name="Delcher A."/>
            <person name="Dew I."/>
            <person name="Evans C.A."/>
            <person name="Flanigan M."/>
            <person name="Grundschober-Freimoser A."/>
            <person name="Friedli L."/>
            <person name="Gu Z."/>
            <person name="Guan P."/>
            <person name="Guigo R."/>
            <person name="Hillenmeyer M.E."/>
            <person name="Hladun S.L."/>
            <person name="Hogan J.R."/>
            <person name="Hong Y.S."/>
            <person name="Hoover J."/>
            <person name="Jaillon O."/>
            <person name="Ke Z."/>
            <person name="Kodira C.D."/>
            <person name="Kokoza E."/>
            <person name="Koutsos A."/>
            <person name="Letunic I."/>
            <person name="Levitsky A.A."/>
            <person name="Liang Y."/>
            <person name="Lin J.-J."/>
            <person name="Lobo N.F."/>
            <person name="Lopez J.R."/>
            <person name="Malek J.A."/>
            <person name="McIntosh T.C."/>
            <person name="Meister S."/>
            <person name="Miller J.R."/>
            <person name="Mobarry C."/>
            <person name="Mongin E."/>
            <person name="Murphy S.D."/>
            <person name="O'Brochta D.A."/>
            <person name="Pfannkoch C."/>
            <person name="Qi R."/>
            <person name="Regier M.A."/>
            <person name="Remington K."/>
            <person name="Shao H."/>
            <person name="Sharakhova M.V."/>
            <person name="Sitter C.D."/>
            <person name="Shetty J."/>
            <person name="Smith T.J."/>
            <person name="Strong R."/>
            <person name="Sun J."/>
            <person name="Thomasova D."/>
            <person name="Ton L.Q."/>
            <person name="Topalis P."/>
            <person name="Tu Z.J."/>
            <person name="Unger M.F."/>
            <person name="Walenz B."/>
            <person name="Wang A.H."/>
            <person name="Wang J."/>
            <person name="Wang M."/>
            <person name="Wang X."/>
            <person name="Woodford K.J."/>
            <person name="Wortman J.R."/>
            <person name="Wu M."/>
            <person name="Yao A."/>
            <person name="Zdobnov E.M."/>
            <person name="Zhang H."/>
            <person name="Zhao Q."/>
            <person name="Zhao S."/>
            <person name="Zhu S.C."/>
            <person name="Zhimulev I."/>
            <person name="Coluzzi M."/>
            <person name="della Torre A."/>
            <person name="Roth C.W."/>
            <person name="Louis C."/>
            <person name="Kalush F."/>
            <person name="Mural R.J."/>
            <person name="Myers E.W."/>
            <person name="Adams M.D."/>
            <person name="Smith H.O."/>
            <person name="Broder S."/>
            <person name="Gardner M.J."/>
            <person name="Fraser C.M."/>
            <person name="Birney E."/>
            <person name="Bork P."/>
            <person name="Brey P.T."/>
            <person name="Venter J.C."/>
            <person name="Weissenbach J."/>
            <person name="Kafatos F.C."/>
            <person name="Collins F.H."/>
            <person name="Hoffman S.L."/>
        </authorList>
    </citation>
    <scope>NUCLEOTIDE SEQUENCE [LARGE SCALE GENOMIC DNA]</scope>
    <source>
        <strain>PEST</strain>
    </source>
</reference>
<keyword id="KW-0539">Nucleus</keyword>
<keyword id="KW-1185">Reference proteome</keyword>
<keyword id="KW-0677">Repeat</keyword>
<keyword id="KW-0690">Ribosome biogenesis</keyword>
<keyword id="KW-0698">rRNA processing</keyword>
<keyword id="KW-0853">WD repeat</keyword>
<accession>Q7QJ33</accession>
<protein>
    <recommendedName>
        <fullName evidence="1">Ribosome biogenesis protein WDR12 homolog</fullName>
    </recommendedName>
</protein>
<sequence>MSLHITSATEGQLQVHFTTKQKQYAVPDVPYSIRANVGCSELNTLLGTVLKDAGNKQGAKVAFDFLLNGEFVRSTLSQHLKERDISFEDTIELEYVERYPAPQPQDCLLHDDWVSAVQAKDGWILTGTYDNTVNLWNTKGKHKLTIPGHVAAVKGVAWISLNEQTGVFASASHDQTIMIWEWNMTTNTAECVHVCKGHERGVGCIAVNPAKTQMASGSMDTMLKIWSTELQADKGEPSATKKAKLEQDNVRTPVVTLAGHREFVSGVQWIDNTTIATCSWDHTIKLWDLSMGGIKTEFTGNKSFFDLSYSPLNGMIITASPDKNLRLYDPRSKHGNFVKNTYLGHSQWVQTCRWSTTNEYLFVSGAYDNRVKLWDYRSPKAPIFELIGHEDKVLACDWSNPKYILSGGSDNAVRVFKSRIAVDNTKDD</sequence>
<proteinExistence type="inferred from homology"/>
<gene>
    <name type="ORF">AGAP007244</name>
</gene>